<sequence length="473" mass="52201">MNAAVIDSHSAQDYVVADIALAGWGRKELNIAETEMPGLVQIRDEYKAQQPLKGARIAGSLHMTIQTGVLIETLKALGADVRWASCNIFSTQDHAAAAIVEAGTPVFAFKGESLDEYWEFSHRIFEWPNGEFANMILDDGGDATLLLILGSKAEKDRSVIARPTNEEEVALFKSIERHLEIDGSWYSKRLAHIKGVTEETTTGVHRLYQMEKDGRLPFPAFNVNDSVTKSKFDNLYGCRESLVDGIKRATDVMIAGKIAVVAGYGDVGKGCAQSLRGLGATVWVTEIDPICALQAAMEGYRVVTMEYAADKADIFVTATGNYHVINHDHMKAMRHNAIVCNIGHFDSEIDVASTRQYQWENIKPQVDHIIFPDGKRVILLAEGRLVNLGCATGHPSFVMSNSFTNQTLAQIELFTRGGEYANKVYVLPKHLDEKVARLHLARIGAQLSELSDDQAAYIGVSKAGPFKPDHYRY</sequence>
<protein>
    <recommendedName>
        <fullName evidence="1">Adenosylhomocysteinase</fullName>
        <ecNumber evidence="1">3.13.2.1</ecNumber>
    </recommendedName>
    <alternativeName>
        <fullName evidence="1">S-adenosyl-L-homocysteine hydrolase</fullName>
        <shortName evidence="1">AdoHcyase</shortName>
    </alternativeName>
</protein>
<dbReference type="EC" id="3.13.2.1" evidence="1"/>
<dbReference type="EMBL" id="CP000010">
    <property type="protein sequence ID" value="AAU48323.1"/>
    <property type="molecule type" value="Genomic_DNA"/>
</dbReference>
<dbReference type="RefSeq" id="WP_004198634.1">
    <property type="nucleotide sequence ID" value="NC_006348.1"/>
</dbReference>
<dbReference type="RefSeq" id="YP_104353.1">
    <property type="nucleotide sequence ID" value="NC_006348.1"/>
</dbReference>
<dbReference type="SMR" id="Q62G22"/>
<dbReference type="GeneID" id="93061911"/>
<dbReference type="KEGG" id="bma:BMA2842"/>
<dbReference type="PATRIC" id="fig|243160.12.peg.2911"/>
<dbReference type="eggNOG" id="COG0499">
    <property type="taxonomic scope" value="Bacteria"/>
</dbReference>
<dbReference type="HOGENOM" id="CLU_025194_2_1_4"/>
<dbReference type="UniPathway" id="UPA00314">
    <property type="reaction ID" value="UER00076"/>
</dbReference>
<dbReference type="Proteomes" id="UP000006693">
    <property type="component" value="Chromosome 1"/>
</dbReference>
<dbReference type="GO" id="GO:0005829">
    <property type="term" value="C:cytosol"/>
    <property type="evidence" value="ECO:0007669"/>
    <property type="project" value="TreeGrafter"/>
</dbReference>
<dbReference type="GO" id="GO:0004013">
    <property type="term" value="F:adenosylhomocysteinase activity"/>
    <property type="evidence" value="ECO:0007669"/>
    <property type="project" value="UniProtKB-UniRule"/>
</dbReference>
<dbReference type="GO" id="GO:0071269">
    <property type="term" value="P:L-homocysteine biosynthetic process"/>
    <property type="evidence" value="ECO:0007669"/>
    <property type="project" value="UniProtKB-UniRule"/>
</dbReference>
<dbReference type="GO" id="GO:0006730">
    <property type="term" value="P:one-carbon metabolic process"/>
    <property type="evidence" value="ECO:0007669"/>
    <property type="project" value="UniProtKB-KW"/>
</dbReference>
<dbReference type="GO" id="GO:0033353">
    <property type="term" value="P:S-adenosylmethionine cycle"/>
    <property type="evidence" value="ECO:0007669"/>
    <property type="project" value="TreeGrafter"/>
</dbReference>
<dbReference type="CDD" id="cd00401">
    <property type="entry name" value="SAHH"/>
    <property type="match status" value="1"/>
</dbReference>
<dbReference type="FunFam" id="3.40.50.720:FF:000004">
    <property type="entry name" value="Adenosylhomocysteinase"/>
    <property type="match status" value="1"/>
</dbReference>
<dbReference type="Gene3D" id="3.40.50.1480">
    <property type="entry name" value="Adenosylhomocysteinase-like"/>
    <property type="match status" value="1"/>
</dbReference>
<dbReference type="Gene3D" id="3.40.50.720">
    <property type="entry name" value="NAD(P)-binding Rossmann-like Domain"/>
    <property type="match status" value="1"/>
</dbReference>
<dbReference type="HAMAP" id="MF_00563">
    <property type="entry name" value="AdoHcyase"/>
    <property type="match status" value="1"/>
</dbReference>
<dbReference type="InterPro" id="IPR042172">
    <property type="entry name" value="Adenosylhomocyst_ase-like_sf"/>
</dbReference>
<dbReference type="InterPro" id="IPR000043">
    <property type="entry name" value="Adenosylhomocysteinase-like"/>
</dbReference>
<dbReference type="InterPro" id="IPR015878">
    <property type="entry name" value="Ado_hCys_hydrolase_NAD-bd"/>
</dbReference>
<dbReference type="InterPro" id="IPR036291">
    <property type="entry name" value="NAD(P)-bd_dom_sf"/>
</dbReference>
<dbReference type="InterPro" id="IPR020082">
    <property type="entry name" value="S-Ado-L-homoCys_hydrolase_CS"/>
</dbReference>
<dbReference type="NCBIfam" id="TIGR00936">
    <property type="entry name" value="ahcY"/>
    <property type="match status" value="1"/>
</dbReference>
<dbReference type="NCBIfam" id="NF004005">
    <property type="entry name" value="PRK05476.2-3"/>
    <property type="match status" value="1"/>
</dbReference>
<dbReference type="PANTHER" id="PTHR23420">
    <property type="entry name" value="ADENOSYLHOMOCYSTEINASE"/>
    <property type="match status" value="1"/>
</dbReference>
<dbReference type="PANTHER" id="PTHR23420:SF0">
    <property type="entry name" value="ADENOSYLHOMOCYSTEINASE"/>
    <property type="match status" value="1"/>
</dbReference>
<dbReference type="Pfam" id="PF05221">
    <property type="entry name" value="AdoHcyase"/>
    <property type="match status" value="1"/>
</dbReference>
<dbReference type="Pfam" id="PF00670">
    <property type="entry name" value="AdoHcyase_NAD"/>
    <property type="match status" value="1"/>
</dbReference>
<dbReference type="PIRSF" id="PIRSF001109">
    <property type="entry name" value="Ad_hcy_hydrolase"/>
    <property type="match status" value="1"/>
</dbReference>
<dbReference type="SMART" id="SM00996">
    <property type="entry name" value="AdoHcyase"/>
    <property type="match status" value="1"/>
</dbReference>
<dbReference type="SMART" id="SM00997">
    <property type="entry name" value="AdoHcyase_NAD"/>
    <property type="match status" value="1"/>
</dbReference>
<dbReference type="SUPFAM" id="SSF52283">
    <property type="entry name" value="Formate/glycerate dehydrogenase catalytic domain-like"/>
    <property type="match status" value="1"/>
</dbReference>
<dbReference type="SUPFAM" id="SSF51735">
    <property type="entry name" value="NAD(P)-binding Rossmann-fold domains"/>
    <property type="match status" value="1"/>
</dbReference>
<dbReference type="PROSITE" id="PS00738">
    <property type="entry name" value="ADOHCYASE_1"/>
    <property type="match status" value="1"/>
</dbReference>
<dbReference type="PROSITE" id="PS00739">
    <property type="entry name" value="ADOHCYASE_2"/>
    <property type="match status" value="1"/>
</dbReference>
<proteinExistence type="inferred from homology"/>
<organism>
    <name type="scientific">Burkholderia mallei (strain ATCC 23344)</name>
    <dbReference type="NCBI Taxonomy" id="243160"/>
    <lineage>
        <taxon>Bacteria</taxon>
        <taxon>Pseudomonadati</taxon>
        <taxon>Pseudomonadota</taxon>
        <taxon>Betaproteobacteria</taxon>
        <taxon>Burkholderiales</taxon>
        <taxon>Burkholderiaceae</taxon>
        <taxon>Burkholderia</taxon>
        <taxon>pseudomallei group</taxon>
    </lineage>
</organism>
<feature type="chain" id="PRO_0000116953" description="Adenosylhomocysteinase">
    <location>
        <begin position="1"/>
        <end position="473"/>
    </location>
</feature>
<feature type="binding site" evidence="1">
    <location>
        <position position="64"/>
    </location>
    <ligand>
        <name>substrate</name>
    </ligand>
</feature>
<feature type="binding site" evidence="1">
    <location>
        <position position="139"/>
    </location>
    <ligand>
        <name>substrate</name>
    </ligand>
</feature>
<feature type="binding site" evidence="1">
    <location>
        <position position="199"/>
    </location>
    <ligand>
        <name>substrate</name>
    </ligand>
</feature>
<feature type="binding site" evidence="1">
    <location>
        <begin position="200"/>
        <end position="202"/>
    </location>
    <ligand>
        <name>NAD(+)</name>
        <dbReference type="ChEBI" id="CHEBI:57540"/>
    </ligand>
</feature>
<feature type="binding site" evidence="1">
    <location>
        <position position="229"/>
    </location>
    <ligand>
        <name>substrate</name>
    </ligand>
</feature>
<feature type="binding site" evidence="1">
    <location>
        <position position="233"/>
    </location>
    <ligand>
        <name>substrate</name>
    </ligand>
</feature>
<feature type="binding site" evidence="1">
    <location>
        <position position="234"/>
    </location>
    <ligand>
        <name>NAD(+)</name>
        <dbReference type="ChEBI" id="CHEBI:57540"/>
    </ligand>
</feature>
<feature type="binding site" evidence="1">
    <location>
        <begin position="263"/>
        <end position="268"/>
    </location>
    <ligand>
        <name>NAD(+)</name>
        <dbReference type="ChEBI" id="CHEBI:57540"/>
    </ligand>
</feature>
<feature type="binding site" evidence="1">
    <location>
        <position position="286"/>
    </location>
    <ligand>
        <name>NAD(+)</name>
        <dbReference type="ChEBI" id="CHEBI:57540"/>
    </ligand>
</feature>
<feature type="binding site" evidence="1">
    <location>
        <position position="321"/>
    </location>
    <ligand>
        <name>NAD(+)</name>
        <dbReference type="ChEBI" id="CHEBI:57540"/>
    </ligand>
</feature>
<feature type="binding site" evidence="1">
    <location>
        <begin position="342"/>
        <end position="344"/>
    </location>
    <ligand>
        <name>NAD(+)</name>
        <dbReference type="ChEBI" id="CHEBI:57540"/>
    </ligand>
</feature>
<feature type="binding site" evidence="1">
    <location>
        <position position="387"/>
    </location>
    <ligand>
        <name>NAD(+)</name>
        <dbReference type="ChEBI" id="CHEBI:57540"/>
    </ligand>
</feature>
<keyword id="KW-0963">Cytoplasm</keyword>
<keyword id="KW-0378">Hydrolase</keyword>
<keyword id="KW-0520">NAD</keyword>
<keyword id="KW-0554">One-carbon metabolism</keyword>
<keyword id="KW-1185">Reference proteome</keyword>
<evidence type="ECO:0000255" key="1">
    <source>
        <dbReference type="HAMAP-Rule" id="MF_00563"/>
    </source>
</evidence>
<accession>Q62G22</accession>
<comment type="function">
    <text evidence="1">May play a key role in the regulation of the intracellular concentration of adenosylhomocysteine.</text>
</comment>
<comment type="catalytic activity">
    <reaction evidence="1">
        <text>S-adenosyl-L-homocysteine + H2O = L-homocysteine + adenosine</text>
        <dbReference type="Rhea" id="RHEA:21708"/>
        <dbReference type="ChEBI" id="CHEBI:15377"/>
        <dbReference type="ChEBI" id="CHEBI:16335"/>
        <dbReference type="ChEBI" id="CHEBI:57856"/>
        <dbReference type="ChEBI" id="CHEBI:58199"/>
        <dbReference type="EC" id="3.13.2.1"/>
    </reaction>
</comment>
<comment type="cofactor">
    <cofactor evidence="1">
        <name>NAD(+)</name>
        <dbReference type="ChEBI" id="CHEBI:57540"/>
    </cofactor>
    <text evidence="1">Binds 1 NAD(+) per subunit.</text>
</comment>
<comment type="pathway">
    <text evidence="1">Amino-acid biosynthesis; L-homocysteine biosynthesis; L-homocysteine from S-adenosyl-L-homocysteine: step 1/1.</text>
</comment>
<comment type="subcellular location">
    <subcellularLocation>
        <location evidence="1">Cytoplasm</location>
    </subcellularLocation>
</comment>
<comment type="similarity">
    <text evidence="1">Belongs to the adenosylhomocysteinase family.</text>
</comment>
<gene>
    <name evidence="1" type="primary">ahcY</name>
    <name type="ordered locus">BMA2842</name>
</gene>
<name>SAHH_BURMA</name>
<reference key="1">
    <citation type="journal article" date="2004" name="Proc. Natl. Acad. Sci. U.S.A.">
        <title>Structural flexibility in the Burkholderia mallei genome.</title>
        <authorList>
            <person name="Nierman W.C."/>
            <person name="DeShazer D."/>
            <person name="Kim H.S."/>
            <person name="Tettelin H."/>
            <person name="Nelson K.E."/>
            <person name="Feldblyum T.V."/>
            <person name="Ulrich R.L."/>
            <person name="Ronning C.M."/>
            <person name="Brinkac L.M."/>
            <person name="Daugherty S.C."/>
            <person name="Davidsen T.D."/>
            <person name="DeBoy R.T."/>
            <person name="Dimitrov G."/>
            <person name="Dodson R.J."/>
            <person name="Durkin A.S."/>
            <person name="Gwinn M.L."/>
            <person name="Haft D.H."/>
            <person name="Khouri H.M."/>
            <person name="Kolonay J.F."/>
            <person name="Madupu R."/>
            <person name="Mohammoud Y."/>
            <person name="Nelson W.C."/>
            <person name="Radune D."/>
            <person name="Romero C.M."/>
            <person name="Sarria S."/>
            <person name="Selengut J."/>
            <person name="Shamblin C."/>
            <person name="Sullivan S.A."/>
            <person name="White O."/>
            <person name="Yu Y."/>
            <person name="Zafar N."/>
            <person name="Zhou L."/>
            <person name="Fraser C.M."/>
        </authorList>
    </citation>
    <scope>NUCLEOTIDE SEQUENCE [LARGE SCALE GENOMIC DNA]</scope>
    <source>
        <strain>ATCC 23344</strain>
    </source>
</reference>